<gene>
    <name type="primary">folA</name>
    <name type="synonym">dfrC</name>
    <name type="synonym">folA1</name>
</gene>
<keyword id="KW-0521">NADP</keyword>
<keyword id="KW-0554">One-carbon metabolism</keyword>
<keyword id="KW-0560">Oxidoreductase</keyword>
<evidence type="ECO:0000250" key="1"/>
<evidence type="ECO:0000255" key="2">
    <source>
        <dbReference type="PROSITE-ProRule" id="PRU00660"/>
    </source>
</evidence>
<evidence type="ECO:0000269" key="3">
    <source>
    </source>
</evidence>
<evidence type="ECO:0000305" key="4"/>
<proteinExistence type="evidence at protein level"/>
<feature type="chain" id="PRO_0000186413" description="Dihydrofolate reductase">
    <location>
        <begin position="1"/>
        <end position="161"/>
    </location>
</feature>
<feature type="domain" description="DHFR" evidence="2">
    <location>
        <begin position="2"/>
        <end position="157"/>
    </location>
</feature>
<feature type="binding site" evidence="1">
    <location>
        <begin position="6"/>
        <end position="8"/>
    </location>
    <ligand>
        <name>substrate</name>
    </ligand>
</feature>
<feature type="binding site" evidence="1">
    <location>
        <begin position="7"/>
        <end position="8"/>
    </location>
    <ligand>
        <name>NADP(+)</name>
        <dbReference type="ChEBI" id="CHEBI:58349"/>
    </ligand>
</feature>
<feature type="binding site" evidence="1">
    <location>
        <begin position="15"/>
        <end position="20"/>
    </location>
    <ligand>
        <name>NADP(+)</name>
        <dbReference type="ChEBI" id="CHEBI:58349"/>
    </ligand>
</feature>
<feature type="binding site" evidence="1">
    <location>
        <position position="28"/>
    </location>
    <ligand>
        <name>substrate</name>
    </ligand>
</feature>
<feature type="binding site" evidence="1">
    <location>
        <begin position="44"/>
        <end position="47"/>
    </location>
    <ligand>
        <name>NADP(+)</name>
        <dbReference type="ChEBI" id="CHEBI:58349"/>
    </ligand>
</feature>
<feature type="binding site" evidence="1">
    <location>
        <position position="58"/>
    </location>
    <ligand>
        <name>substrate</name>
    </ligand>
</feature>
<feature type="binding site" evidence="1">
    <location>
        <begin position="63"/>
        <end position="66"/>
    </location>
    <ligand>
        <name>NADP(+)</name>
        <dbReference type="ChEBI" id="CHEBI:58349"/>
    </ligand>
</feature>
<feature type="binding site" evidence="1">
    <location>
        <begin position="93"/>
        <end position="98"/>
    </location>
    <ligand>
        <name>NADP(+)</name>
        <dbReference type="ChEBI" id="CHEBI:58349"/>
    </ligand>
</feature>
<feature type="binding site" evidence="1">
    <location>
        <position position="112"/>
    </location>
    <ligand>
        <name>substrate</name>
    </ligand>
</feature>
<feature type="mutagenesis site" description="3-fold increase of KM for dihydrofolate." evidence="3">
    <original>V</original>
    <variation>I</variation>
    <location>
        <position position="32"/>
    </location>
</feature>
<feature type="mutagenesis site" description="5-fold increase of KM for NADPH." evidence="3">
    <original>G</original>
    <variation>A</variation>
    <location>
        <position position="44"/>
    </location>
</feature>
<feature type="mutagenesis site" description="Trimethoprim resistance." evidence="3">
    <original>F</original>
    <variation>Y</variation>
    <location>
        <position position="99"/>
    </location>
</feature>
<sequence>MTLSIIVAHDKQRVIGYQNQLPWHLPNDLKHVKQLTTGNTLVMGRKTFNSIGKPLPNRRNVVLTNQASFHHEGVDVINSLDEIKELSGHVFIFGGQTLFEAMIDQVDDMYITVIDGKFQGDTFFPPYTFENWEVESSVEGQLDEKNTIPHTFLHLVRRKGK</sequence>
<organism>
    <name type="scientific">Staphylococcus epidermidis</name>
    <dbReference type="NCBI Taxonomy" id="1282"/>
    <lineage>
        <taxon>Bacteria</taxon>
        <taxon>Bacillati</taxon>
        <taxon>Bacillota</taxon>
        <taxon>Bacilli</taxon>
        <taxon>Bacillales</taxon>
        <taxon>Staphylococcaceae</taxon>
        <taxon>Staphylococcus</taxon>
    </lineage>
</organism>
<protein>
    <recommendedName>
        <fullName>Dihydrofolate reductase</fullName>
        <shortName>DHFR</shortName>
        <ecNumber>1.5.1.3</ecNumber>
    </recommendedName>
</protein>
<dbReference type="EC" id="1.5.1.3"/>
<dbReference type="EMBL" id="Z48233">
    <property type="protein sequence ID" value="CAA88269.1"/>
    <property type="molecule type" value="Genomic_DNA"/>
</dbReference>
<dbReference type="PIR" id="A57271">
    <property type="entry name" value="A57271"/>
</dbReference>
<dbReference type="RefSeq" id="WP_001830952.1">
    <property type="nucleotide sequence ID" value="NZ_WLVA01000001.1"/>
</dbReference>
<dbReference type="SMR" id="P0C0P0"/>
<dbReference type="GeneID" id="50018758"/>
<dbReference type="PATRIC" id="fig|1282.1160.peg.1857"/>
<dbReference type="OMA" id="RDNQLPW"/>
<dbReference type="UniPathway" id="UPA00077">
    <property type="reaction ID" value="UER00158"/>
</dbReference>
<dbReference type="GO" id="GO:0005829">
    <property type="term" value="C:cytosol"/>
    <property type="evidence" value="ECO:0007669"/>
    <property type="project" value="TreeGrafter"/>
</dbReference>
<dbReference type="GO" id="GO:0004146">
    <property type="term" value="F:dihydrofolate reductase activity"/>
    <property type="evidence" value="ECO:0007669"/>
    <property type="project" value="UniProtKB-EC"/>
</dbReference>
<dbReference type="GO" id="GO:0050661">
    <property type="term" value="F:NADP binding"/>
    <property type="evidence" value="ECO:0007669"/>
    <property type="project" value="InterPro"/>
</dbReference>
<dbReference type="GO" id="GO:0046452">
    <property type="term" value="P:dihydrofolate metabolic process"/>
    <property type="evidence" value="ECO:0007669"/>
    <property type="project" value="TreeGrafter"/>
</dbReference>
<dbReference type="GO" id="GO:0046655">
    <property type="term" value="P:folic acid metabolic process"/>
    <property type="evidence" value="ECO:0007669"/>
    <property type="project" value="TreeGrafter"/>
</dbReference>
<dbReference type="GO" id="GO:0006730">
    <property type="term" value="P:one-carbon metabolic process"/>
    <property type="evidence" value="ECO:0007669"/>
    <property type="project" value="UniProtKB-KW"/>
</dbReference>
<dbReference type="GO" id="GO:0046654">
    <property type="term" value="P:tetrahydrofolate biosynthetic process"/>
    <property type="evidence" value="ECO:0007669"/>
    <property type="project" value="UniProtKB-UniPathway"/>
</dbReference>
<dbReference type="CDD" id="cd00209">
    <property type="entry name" value="DHFR"/>
    <property type="match status" value="1"/>
</dbReference>
<dbReference type="FunFam" id="3.40.430.10:FF:000001">
    <property type="entry name" value="Dihydrofolate reductase"/>
    <property type="match status" value="1"/>
</dbReference>
<dbReference type="Gene3D" id="3.40.430.10">
    <property type="entry name" value="Dihydrofolate Reductase, subunit A"/>
    <property type="match status" value="1"/>
</dbReference>
<dbReference type="InterPro" id="IPR012259">
    <property type="entry name" value="DHFR"/>
</dbReference>
<dbReference type="InterPro" id="IPR024072">
    <property type="entry name" value="DHFR-like_dom_sf"/>
</dbReference>
<dbReference type="InterPro" id="IPR017925">
    <property type="entry name" value="DHFR_CS"/>
</dbReference>
<dbReference type="InterPro" id="IPR001796">
    <property type="entry name" value="DHFR_dom"/>
</dbReference>
<dbReference type="NCBIfam" id="NF000155">
    <property type="entry name" value="trim_DfrC"/>
    <property type="match status" value="1"/>
</dbReference>
<dbReference type="PANTHER" id="PTHR48069">
    <property type="entry name" value="DIHYDROFOLATE REDUCTASE"/>
    <property type="match status" value="1"/>
</dbReference>
<dbReference type="PANTHER" id="PTHR48069:SF3">
    <property type="entry name" value="DIHYDROFOLATE REDUCTASE"/>
    <property type="match status" value="1"/>
</dbReference>
<dbReference type="Pfam" id="PF00186">
    <property type="entry name" value="DHFR_1"/>
    <property type="match status" value="1"/>
</dbReference>
<dbReference type="PIRSF" id="PIRSF000194">
    <property type="entry name" value="DHFR"/>
    <property type="match status" value="1"/>
</dbReference>
<dbReference type="PRINTS" id="PR00070">
    <property type="entry name" value="DHFR"/>
</dbReference>
<dbReference type="SUPFAM" id="SSF53597">
    <property type="entry name" value="Dihydrofolate reductase-like"/>
    <property type="match status" value="1"/>
</dbReference>
<dbReference type="PROSITE" id="PS00075">
    <property type="entry name" value="DHFR_1"/>
    <property type="match status" value="1"/>
</dbReference>
<dbReference type="PROSITE" id="PS51330">
    <property type="entry name" value="DHFR_2"/>
    <property type="match status" value="1"/>
</dbReference>
<name>DYR_STAEP</name>
<accession>P0C0P0</accession>
<accession>Q59908</accession>
<reference key="1">
    <citation type="journal article" date="1995" name="J. Bacteriol.">
        <title>Characterization of the gene for the chromosomal dihydrofolate reductase (DHFR) of Staphylococcus epidermidis ATCC 14990: the origin of the trimethoprim-resistant S1 DHFR from Staphylococcus aureus?</title>
        <authorList>
            <person name="Dale G.E."/>
            <person name="Broger C."/>
            <person name="Hartman P.G."/>
            <person name="Langen H."/>
            <person name="Page M.G.P."/>
            <person name="Then R.L."/>
            <person name="Stueber D."/>
        </authorList>
    </citation>
    <scope>NUCLEOTIDE SEQUENCE [GENOMIC DNA]</scope>
    <scope>MUTAGENESIS</scope>
    <source>
        <strain>ATCC 14990 / DSM 20044 / CIP 81.55 / NCTC 11047</strain>
    </source>
</reference>
<comment type="function">
    <text evidence="1">Key enzyme in folate metabolism. Catalyzes an essential reaction for de novo glycine and purine synthesis, and for DNA precursor synthesis (By similarity).</text>
</comment>
<comment type="catalytic activity">
    <reaction evidence="2">
        <text>(6S)-5,6,7,8-tetrahydrofolate + NADP(+) = 7,8-dihydrofolate + NADPH + H(+)</text>
        <dbReference type="Rhea" id="RHEA:15009"/>
        <dbReference type="ChEBI" id="CHEBI:15378"/>
        <dbReference type="ChEBI" id="CHEBI:57451"/>
        <dbReference type="ChEBI" id="CHEBI:57453"/>
        <dbReference type="ChEBI" id="CHEBI:57783"/>
        <dbReference type="ChEBI" id="CHEBI:58349"/>
        <dbReference type="EC" id="1.5.1.3"/>
    </reaction>
</comment>
<comment type="pathway">
    <text>Cofactor biosynthesis; tetrahydrofolate biosynthesis; 5,6,7,8-tetrahydrofolate from 7,8-dihydrofolate: step 1/1.</text>
</comment>
<comment type="miscellaneous">
    <text>Trimethoprim sensitive.</text>
</comment>
<comment type="similarity">
    <text evidence="4">Belongs to the dihydrofolate reductase family.</text>
</comment>